<keyword id="KW-0002">3D-structure</keyword>
<keyword id="KW-0963">Cytoplasm</keyword>
<keyword id="KW-0378">Hydrolase</keyword>
<keyword id="KW-0539">Nucleus</keyword>
<keyword id="KW-1185">Reference proteome</keyword>
<comment type="function">
    <text evidence="4 5 7 8 9 10 12">Involved in strigolactone (SL) signaling pathway. May function downstream of SL synthesis, as a component of hormone signaling or as an enzyme that participates in the conversion of SL to the bioactive form. Strigolactones are hormones that inhibit tillering and shoot branching through the MAX-dependent pathway, contribute to the regulation of shoot architectural response to phosphate-limiting conditions and function as rhizosphere signal that stimulates hyphal branching of arbuscular mycorrhizal fungi and trigger seed germination of root parasitic weeds (PubMed:19542179, PubMed:19579033, PubMed:23301669). Strigolactone-dependent association of D14 with D3 and D53 (a repressor of SL signaling) triggers D53 ubiquitination and degradation (PubMed:24336200, PubMed:24616269). Hydrolyzes the butenolide ring of SLs (PubMed:23381136, PubMed:24131983). A reaction product D-OH is trapped in the cavity of D14, inducing the interaction with SLR1, and probably with other proteins such as D3 and D53 (PubMed:24131983). Contributes to the negative regulation of gibberellin signaling (PubMed:24131983).</text>
</comment>
<comment type="subunit">
    <text evidence="9 10 11 12">Interacts with D53 (PubMed:24336200, PubMed:24336215, PubMed:25713176). The interaction between D53 and D14 is enhanced in the presence of strigolactones (PubMed:24336200, PubMed:24336215). The interaction with D53 occurs in the presence of (2'R) stereoisomers of strigolactones, but not (2'S) stereoisomers (PubMed:25713176). Interacts with SLR1 in a strigolactone-dependent manner (PubMed:24131983). Interacts with D3 in a strigolactone-dependent manner (PubMed:24336200, PubMed:24336215, PubMed:24616269).</text>
</comment>
<comment type="subcellular location">
    <subcellularLocation>
        <location evidence="9">Cytoplasm</location>
    </subcellularLocation>
    <subcellularLocation>
        <location evidence="9 12">Nucleus</location>
    </subcellularLocation>
    <text evidence="9 12">The interaction between D14 and SLR1 takes place in the nucleus (PubMed:24131983). The interaction between D14 and D3 takes place in the nucleus (PubMed:24616269).</text>
</comment>
<comment type="tissue specificity">
    <text evidence="4 6">Expressed in the parenchyma cells of the root stele and lateral roots, vascular tissues of vein and leaf sheath, ligule base, auricle base and stem base.</text>
</comment>
<comment type="disruption phenotype">
    <text evidence="2 3 4 5">Increased number of tillers, reduced plant height, and elevated levels of strigolactones.</text>
</comment>
<comment type="similarity">
    <text evidence="17">Belongs to the AB hydrolase superfamily.</text>
</comment>
<organism>
    <name type="scientific">Oryza sativa subsp. japonica</name>
    <name type="common">Rice</name>
    <dbReference type="NCBI Taxonomy" id="39947"/>
    <lineage>
        <taxon>Eukaryota</taxon>
        <taxon>Viridiplantae</taxon>
        <taxon>Streptophyta</taxon>
        <taxon>Embryophyta</taxon>
        <taxon>Tracheophyta</taxon>
        <taxon>Spermatophyta</taxon>
        <taxon>Magnoliopsida</taxon>
        <taxon>Liliopsida</taxon>
        <taxon>Poales</taxon>
        <taxon>Poaceae</taxon>
        <taxon>BOP clade</taxon>
        <taxon>Oryzoideae</taxon>
        <taxon>Oryzeae</taxon>
        <taxon>Oryzinae</taxon>
        <taxon>Oryza</taxon>
        <taxon>Oryza sativa</taxon>
    </lineage>
</organism>
<name>D14_ORYSJ</name>
<accession>Q10QA5</accession>
<accession>A0A0N7KGS6</accession>
<dbReference type="EC" id="3.1.-.-" evidence="17"/>
<dbReference type="EMBL" id="GQ406388">
    <property type="protein sequence ID" value="ACV30015.1"/>
    <property type="molecule type" value="Genomic_DNA"/>
</dbReference>
<dbReference type="EMBL" id="DP000009">
    <property type="protein sequence ID" value="ABF94525.1"/>
    <property type="molecule type" value="Genomic_DNA"/>
</dbReference>
<dbReference type="EMBL" id="DP000009">
    <property type="protein sequence ID" value="ABF94526.1"/>
    <property type="molecule type" value="Genomic_DNA"/>
</dbReference>
<dbReference type="EMBL" id="AP008209">
    <property type="protein sequence ID" value="BAF11220.1"/>
    <property type="molecule type" value="Genomic_DNA"/>
</dbReference>
<dbReference type="EMBL" id="AP014959">
    <property type="protein sequence ID" value="BAS82841.1"/>
    <property type="molecule type" value="Genomic_DNA"/>
</dbReference>
<dbReference type="EMBL" id="AK070827">
    <property type="protein sequence ID" value="BAG92161.1"/>
    <property type="molecule type" value="mRNA"/>
</dbReference>
<dbReference type="RefSeq" id="XP_015631400.1">
    <property type="nucleotide sequence ID" value="XM_015775914.1"/>
</dbReference>
<dbReference type="PDB" id="3VXK">
    <property type="method" value="X-ray"/>
    <property type="resolution" value="1.75 A"/>
    <property type="chains" value="A/B=54-318"/>
</dbReference>
<dbReference type="PDB" id="3W04">
    <property type="method" value="X-ray"/>
    <property type="resolution" value="1.45 A"/>
    <property type="chains" value="A/B=55-318"/>
</dbReference>
<dbReference type="PDB" id="3W05">
    <property type="method" value="X-ray"/>
    <property type="resolution" value="1.58 A"/>
    <property type="chains" value="A/B=55-318"/>
</dbReference>
<dbReference type="PDB" id="3WIO">
    <property type="method" value="X-ray"/>
    <property type="resolution" value="2.10 A"/>
    <property type="chains" value="A/B=54-318"/>
</dbReference>
<dbReference type="PDB" id="4IH9">
    <property type="method" value="X-ray"/>
    <property type="resolution" value="1.55 A"/>
    <property type="chains" value="A/B=51-318"/>
</dbReference>
<dbReference type="PDB" id="4IHA">
    <property type="method" value="X-ray"/>
    <property type="resolution" value="1.55 A"/>
    <property type="chains" value="A/B=51-318"/>
</dbReference>
<dbReference type="PDB" id="5DJ5">
    <property type="method" value="X-ray"/>
    <property type="resolution" value="2.40 A"/>
    <property type="chains" value="A/B=52-318"/>
</dbReference>
<dbReference type="PDB" id="5YZ7">
    <property type="method" value="X-ray"/>
    <property type="resolution" value="1.90 A"/>
    <property type="chains" value="A/B=54-318"/>
</dbReference>
<dbReference type="PDB" id="5ZHR">
    <property type="method" value="X-ray"/>
    <property type="resolution" value="1.45 A"/>
    <property type="chains" value="A/B=54-318"/>
</dbReference>
<dbReference type="PDB" id="5ZHS">
    <property type="method" value="X-ray"/>
    <property type="resolution" value="1.49 A"/>
    <property type="chains" value="A=54-318"/>
</dbReference>
<dbReference type="PDB" id="5ZHT">
    <property type="method" value="X-ray"/>
    <property type="resolution" value="1.53 A"/>
    <property type="chains" value="A=54-318"/>
</dbReference>
<dbReference type="PDB" id="6AP8">
    <property type="method" value="X-ray"/>
    <property type="resolution" value="1.27 A"/>
    <property type="chains" value="A/B=52-318"/>
</dbReference>
<dbReference type="PDB" id="6BRT">
    <property type="method" value="X-ray"/>
    <property type="resolution" value="2.39 A"/>
    <property type="chains" value="A/B/C/D/E/F/G/H=56-318"/>
</dbReference>
<dbReference type="PDB" id="6ELX">
    <property type="method" value="X-ray"/>
    <property type="resolution" value="1.35 A"/>
    <property type="chains" value="A/B=52-318"/>
</dbReference>
<dbReference type="PDB" id="8IF6">
    <property type="method" value="EM"/>
    <property type="resolution" value="7.09 A"/>
    <property type="chains" value="C=1-318"/>
</dbReference>
<dbReference type="PDBsum" id="3VXK"/>
<dbReference type="PDBsum" id="3W04"/>
<dbReference type="PDBsum" id="3W05"/>
<dbReference type="PDBsum" id="3WIO"/>
<dbReference type="PDBsum" id="4IH9"/>
<dbReference type="PDBsum" id="4IHA"/>
<dbReference type="PDBsum" id="5DJ5"/>
<dbReference type="PDBsum" id="5YZ7"/>
<dbReference type="PDBsum" id="5ZHR"/>
<dbReference type="PDBsum" id="5ZHS"/>
<dbReference type="PDBsum" id="5ZHT"/>
<dbReference type="PDBsum" id="6AP8"/>
<dbReference type="PDBsum" id="6BRT"/>
<dbReference type="PDBsum" id="6ELX"/>
<dbReference type="PDBsum" id="8IF6"/>
<dbReference type="EMDB" id="EMD-35402"/>
<dbReference type="SMR" id="Q10QA5"/>
<dbReference type="FunCoup" id="Q10QA5">
    <property type="interactions" value="20"/>
</dbReference>
<dbReference type="STRING" id="39947.Q10QA5"/>
<dbReference type="ESTHER" id="orysj-Q10QA5">
    <property type="family name" value="RsbQ-like"/>
</dbReference>
<dbReference type="MEROPS" id="S33.A18"/>
<dbReference type="PaxDb" id="39947-Q10QA5"/>
<dbReference type="EnsemblPlants" id="Os03t0203200-01">
    <property type="protein sequence ID" value="Os03t0203200-01"/>
    <property type="gene ID" value="Os03g0203200"/>
</dbReference>
<dbReference type="Gramene" id="Os03t0203200-01">
    <property type="protein sequence ID" value="Os03t0203200-01"/>
    <property type="gene ID" value="Os03g0203200"/>
</dbReference>
<dbReference type="KEGG" id="dosa:Os03g0203200"/>
<dbReference type="eggNOG" id="ENOG502QVRR">
    <property type="taxonomic scope" value="Eukaryota"/>
</dbReference>
<dbReference type="HOGENOM" id="CLU_020336_30_0_1"/>
<dbReference type="InParanoid" id="Q10QA5"/>
<dbReference type="OMA" id="PSCVIQT"/>
<dbReference type="OrthoDB" id="408373at2759"/>
<dbReference type="PlantReactome" id="R-OSA-5654828">
    <property type="pathway name" value="Strigolactone signaling"/>
</dbReference>
<dbReference type="EvolutionaryTrace" id="Q10QA5"/>
<dbReference type="Proteomes" id="UP000000763">
    <property type="component" value="Chromosome 3"/>
</dbReference>
<dbReference type="Proteomes" id="UP000059680">
    <property type="component" value="Chromosome 3"/>
</dbReference>
<dbReference type="GO" id="GO:0005737">
    <property type="term" value="C:cytoplasm"/>
    <property type="evidence" value="ECO:0007669"/>
    <property type="project" value="UniProtKB-SubCell"/>
</dbReference>
<dbReference type="GO" id="GO:0005634">
    <property type="term" value="C:nucleus"/>
    <property type="evidence" value="ECO:0007669"/>
    <property type="project" value="UniProtKB-SubCell"/>
</dbReference>
<dbReference type="GO" id="GO:0016787">
    <property type="term" value="F:hydrolase activity"/>
    <property type="evidence" value="ECO:0007669"/>
    <property type="project" value="UniProtKB-KW"/>
</dbReference>
<dbReference type="GO" id="GO:0010223">
    <property type="term" value="P:secondary shoot formation"/>
    <property type="evidence" value="ECO:0000315"/>
    <property type="project" value="UniProtKB"/>
</dbReference>
<dbReference type="GO" id="GO:1901601">
    <property type="term" value="P:strigolactone biosynthetic process"/>
    <property type="evidence" value="ECO:0000315"/>
    <property type="project" value="UniProtKB"/>
</dbReference>
<dbReference type="FunFam" id="3.40.50.1820:FF:000042">
    <property type="entry name" value="probable strigolactone esterase DAD2"/>
    <property type="match status" value="1"/>
</dbReference>
<dbReference type="Gene3D" id="3.40.50.1820">
    <property type="entry name" value="alpha/beta hydrolase"/>
    <property type="match status" value="1"/>
</dbReference>
<dbReference type="InterPro" id="IPR000073">
    <property type="entry name" value="AB_hydrolase_1"/>
</dbReference>
<dbReference type="InterPro" id="IPR029058">
    <property type="entry name" value="AB_hydrolase_fold"/>
</dbReference>
<dbReference type="PANTHER" id="PTHR43039">
    <property type="entry name" value="ESTERASE-RELATED"/>
    <property type="match status" value="1"/>
</dbReference>
<dbReference type="Pfam" id="PF12697">
    <property type="entry name" value="Abhydrolase_6"/>
    <property type="match status" value="1"/>
</dbReference>
<dbReference type="SUPFAM" id="SSF53474">
    <property type="entry name" value="alpha/beta-Hydrolases"/>
    <property type="match status" value="1"/>
</dbReference>
<evidence type="ECO:0000256" key="1">
    <source>
        <dbReference type="SAM" id="MobiDB-lite"/>
    </source>
</evidence>
<evidence type="ECO:0000269" key="2">
    <source>
    </source>
</evidence>
<evidence type="ECO:0000269" key="3">
    <source>
    </source>
</evidence>
<evidence type="ECO:0000269" key="4">
    <source>
    </source>
</evidence>
<evidence type="ECO:0000269" key="5">
    <source>
    </source>
</evidence>
<evidence type="ECO:0000269" key="6">
    <source>
    </source>
</evidence>
<evidence type="ECO:0000269" key="7">
    <source>
    </source>
</evidence>
<evidence type="ECO:0000269" key="8">
    <source>
    </source>
</evidence>
<evidence type="ECO:0000269" key="9">
    <source>
    </source>
</evidence>
<evidence type="ECO:0000269" key="10">
    <source>
    </source>
</evidence>
<evidence type="ECO:0000269" key="11">
    <source>
    </source>
</evidence>
<evidence type="ECO:0000269" key="12">
    <source>
    </source>
</evidence>
<evidence type="ECO:0000269" key="13">
    <source>
    </source>
</evidence>
<evidence type="ECO:0000303" key="14">
    <source>
    </source>
</evidence>
<evidence type="ECO:0000303" key="15">
    <source>
    </source>
</evidence>
<evidence type="ECO:0000303" key="16">
    <source>
    </source>
</evidence>
<evidence type="ECO:0000305" key="17"/>
<evidence type="ECO:0000312" key="18">
    <source>
        <dbReference type="EMBL" id="ABF94526.1"/>
    </source>
</evidence>
<evidence type="ECO:0000312" key="19">
    <source>
        <dbReference type="EMBL" id="BAS82841.1"/>
    </source>
</evidence>
<evidence type="ECO:0007829" key="20">
    <source>
        <dbReference type="PDB" id="6AP8"/>
    </source>
</evidence>
<sequence length="318" mass="33508">MLRSTHPPPSSPSSSSSGGGGGGGSSASSSSEKTMVGGGGGGGGGSGSAAPSGAKLLQILNVRVVGSGERVVVLSHGFGTDQSAWSRVLPYLTRDHRVVLYDLVCAGSVNPDHFDFRRYDNLDAYVDDLLAILDALRIPRCAFVGHSVSAMIGILASIRRPDLFAKLVLIGASPRFLNDSDYHGGFELEEIQQVFDAMGANYSAWATGYAPLAVGADVPAAVQEFSRTLFNMRPDISLHVCQTVFKTDLRGVLGMVRAPCVVVQTTRDVSVPASVAAYLKAHLGGRTTVEFLQTEGHLPHLSAPSLLAQVLRRALARY</sequence>
<feature type="chain" id="PRO_0000422054" description="Strigolactone esterase D14">
    <location>
        <begin position="1"/>
        <end position="318"/>
    </location>
</feature>
<feature type="region of interest" description="Disordered" evidence="1">
    <location>
        <begin position="1"/>
        <end position="48"/>
    </location>
</feature>
<feature type="compositionally biased region" description="Pro residues" evidence="1">
    <location>
        <begin position="1"/>
        <end position="11"/>
    </location>
</feature>
<feature type="compositionally biased region" description="Gly residues" evidence="1">
    <location>
        <begin position="36"/>
        <end position="47"/>
    </location>
</feature>
<feature type="active site" description="Nucleophile" evidence="10">
    <location>
        <position position="147"/>
    </location>
</feature>
<feature type="active site" evidence="10">
    <location>
        <position position="268"/>
    </location>
</feature>
<feature type="active site" evidence="10">
    <location>
        <position position="297"/>
    </location>
</feature>
<feature type="binding site" evidence="13">
    <location>
        <position position="147"/>
    </location>
    <ligand>
        <name>substrate</name>
    </ligand>
</feature>
<feature type="binding site" evidence="13">
    <location>
        <position position="241"/>
    </location>
    <ligand>
        <name>substrate</name>
    </ligand>
</feature>
<feature type="binding site" evidence="13">
    <location>
        <position position="297"/>
    </location>
    <ligand>
        <name>substrate</name>
    </ligand>
</feature>
<feature type="mutagenesis site" description="In d88; dwarf and high tillering phenotypes." evidence="6">
    <original>G</original>
    <variation>R</variation>
    <location>
        <position position="79"/>
    </location>
</feature>
<feature type="mutagenesis site" description="Weakens interaction with D53 and attenuates strigolactone-induced degradation of D53." evidence="10">
    <original>S</original>
    <variation>A</variation>
    <location>
        <position position="147"/>
    </location>
</feature>
<feature type="mutagenesis site" description="In d14; dwarf and high tillering phenotypes." evidence="10">
    <original>G</original>
    <variation>D</variation>
    <location>
        <position position="153"/>
    </location>
</feature>
<feature type="mutagenesis site" description="Loss of strigolactone-dependent interaction with SLR1." evidence="9">
    <original>F</original>
    <variation>A</variation>
    <location>
        <position position="186"/>
    </location>
</feature>
<feature type="mutagenesis site" description="Decreased enzymatic activity toward strigolactone and loss of strigolactone-dependent interaction with SLR1." evidence="9">
    <original>W</original>
    <variation>A</variation>
    <location>
        <position position="205"/>
    </location>
</feature>
<feature type="mutagenesis site" description="Loss of strigolactone-dependent interaction with SLR1." evidence="9">
    <original>F</original>
    <variation>A</variation>
    <location>
        <position position="245"/>
    </location>
</feature>
<feature type="mutagenesis site" description="Weakens interaction with D53 and attenuates strigolactone-induced degradation of D53." evidence="10">
    <original>D</original>
    <variation>N</variation>
    <location>
        <position position="268"/>
    </location>
</feature>
<feature type="mutagenesis site" description="No effect on strigolactone binding, but decreased enzymatic activity toward strigolactone and loss of interaction with SLR1." evidence="9">
    <original>H</original>
    <variation>A</variation>
    <location>
        <position position="297"/>
    </location>
</feature>
<feature type="mutagenesis site" description="Weakens interaction with D53 and attenuates strigolactone-induced degradation of D53." evidence="10">
    <original>H</original>
    <variation>Y</variation>
    <location>
        <position position="297"/>
    </location>
</feature>
<feature type="helix" evidence="20">
    <location>
        <begin position="54"/>
        <end position="59"/>
    </location>
</feature>
<feature type="strand" evidence="20">
    <location>
        <begin position="63"/>
        <end position="66"/>
    </location>
</feature>
<feature type="strand" evidence="20">
    <location>
        <begin position="69"/>
        <end position="75"/>
    </location>
</feature>
<feature type="helix" evidence="20">
    <location>
        <begin position="82"/>
        <end position="85"/>
    </location>
</feature>
<feature type="turn" evidence="20">
    <location>
        <begin position="86"/>
        <end position="88"/>
    </location>
</feature>
<feature type="helix" evidence="20">
    <location>
        <begin position="89"/>
        <end position="91"/>
    </location>
</feature>
<feature type="turn" evidence="20">
    <location>
        <begin position="92"/>
        <end position="95"/>
    </location>
</feature>
<feature type="strand" evidence="20">
    <location>
        <begin position="96"/>
        <end position="100"/>
    </location>
</feature>
<feature type="helix" evidence="20">
    <location>
        <begin position="111"/>
        <end position="113"/>
    </location>
</feature>
<feature type="helix" evidence="20">
    <location>
        <begin position="118"/>
        <end position="120"/>
    </location>
</feature>
<feature type="helix" evidence="20">
    <location>
        <begin position="122"/>
        <end position="135"/>
    </location>
</feature>
<feature type="strand" evidence="20">
    <location>
        <begin position="141"/>
        <end position="146"/>
    </location>
</feature>
<feature type="helix" evidence="20">
    <location>
        <begin position="148"/>
        <end position="159"/>
    </location>
</feature>
<feature type="turn" evidence="20">
    <location>
        <begin position="161"/>
        <end position="163"/>
    </location>
</feature>
<feature type="strand" evidence="20">
    <location>
        <begin position="164"/>
        <end position="171"/>
    </location>
</feature>
<feature type="helix" evidence="20">
    <location>
        <begin position="188"/>
        <end position="200"/>
    </location>
</feature>
<feature type="helix" evidence="20">
    <location>
        <begin position="202"/>
        <end position="214"/>
    </location>
</feature>
<feature type="helix" evidence="20">
    <location>
        <begin position="219"/>
        <end position="231"/>
    </location>
</feature>
<feature type="helix" evidence="20">
    <location>
        <begin position="234"/>
        <end position="245"/>
    </location>
</feature>
<feature type="helix" evidence="20">
    <location>
        <begin position="250"/>
        <end position="255"/>
    </location>
</feature>
<feature type="strand" evidence="20">
    <location>
        <begin position="260"/>
        <end position="264"/>
    </location>
</feature>
<feature type="helix" evidence="20">
    <location>
        <begin position="273"/>
        <end position="282"/>
    </location>
</feature>
<feature type="strand" evidence="20">
    <location>
        <begin position="287"/>
        <end position="291"/>
    </location>
</feature>
<feature type="helix" evidence="20">
    <location>
        <begin position="299"/>
        <end position="302"/>
    </location>
</feature>
<feature type="helix" evidence="20">
    <location>
        <begin position="304"/>
        <end position="314"/>
    </location>
</feature>
<reference key="1">
    <citation type="journal article" date="2009" name="Plant Mol. Biol.">
        <title>Dwarf 88, a novel putative esterase gene affecting architecture of rice plant.</title>
        <authorList>
            <person name="Gao Z."/>
            <person name="Qian Q."/>
            <person name="Liu X."/>
            <person name="Yan M."/>
            <person name="Feng Q."/>
            <person name="Dong G."/>
            <person name="Liu J."/>
            <person name="Han B."/>
        </authorList>
    </citation>
    <scope>NUCLEOTIDE SEQUENCE [GENOMIC DNA]</scope>
    <scope>TISSUE SPECIFICITY</scope>
    <scope>MUTAGENESIS OF GLY-79</scope>
    <source>
        <strain>cv. Lansheng</strain>
    </source>
</reference>
<reference key="2">
    <citation type="journal article" date="2005" name="Genome Res.">
        <title>Sequence, annotation, and analysis of synteny between rice chromosome 3 and diverged grass species.</title>
        <authorList>
            <consortium name="The rice chromosome 3 sequencing consortium"/>
            <person name="Buell C.R."/>
            <person name="Yuan Q."/>
            <person name="Ouyang S."/>
            <person name="Liu J."/>
            <person name="Zhu W."/>
            <person name="Wang A."/>
            <person name="Maiti R."/>
            <person name="Haas B."/>
            <person name="Wortman J."/>
            <person name="Pertea M."/>
            <person name="Jones K.M."/>
            <person name="Kim M."/>
            <person name="Overton L."/>
            <person name="Tsitrin T."/>
            <person name="Fadrosh D."/>
            <person name="Bera J."/>
            <person name="Weaver B."/>
            <person name="Jin S."/>
            <person name="Johri S."/>
            <person name="Reardon M."/>
            <person name="Webb K."/>
            <person name="Hill J."/>
            <person name="Moffat K."/>
            <person name="Tallon L."/>
            <person name="Van Aken S."/>
            <person name="Lewis M."/>
            <person name="Utterback T."/>
            <person name="Feldblyum T."/>
            <person name="Zismann V."/>
            <person name="Iobst S."/>
            <person name="Hsiao J."/>
            <person name="de Vazeille A.R."/>
            <person name="Salzberg S.L."/>
            <person name="White O."/>
            <person name="Fraser C.M."/>
            <person name="Yu Y."/>
            <person name="Kim H."/>
            <person name="Rambo T."/>
            <person name="Currie J."/>
            <person name="Collura K."/>
            <person name="Kernodle-Thompson S."/>
            <person name="Wei F."/>
            <person name="Kudrna K."/>
            <person name="Ammiraju J.S.S."/>
            <person name="Luo M."/>
            <person name="Goicoechea J.L."/>
            <person name="Wing R.A."/>
            <person name="Henry D."/>
            <person name="Oates R."/>
            <person name="Palmer M."/>
            <person name="Pries G."/>
            <person name="Saski C."/>
            <person name="Simmons J."/>
            <person name="Soderlund C."/>
            <person name="Nelson W."/>
            <person name="de la Bastide M."/>
            <person name="Spiegel L."/>
            <person name="Nascimento L."/>
            <person name="Huang E."/>
            <person name="Preston R."/>
            <person name="Zutavern T."/>
            <person name="Palmer L."/>
            <person name="O'Shaughnessy A."/>
            <person name="Dike S."/>
            <person name="McCombie W.R."/>
            <person name="Minx P."/>
            <person name="Cordum H."/>
            <person name="Wilson R."/>
            <person name="Jin W."/>
            <person name="Lee H.R."/>
            <person name="Jiang J."/>
            <person name="Jackson S."/>
        </authorList>
    </citation>
    <scope>NUCLEOTIDE SEQUENCE [LARGE SCALE GENOMIC DNA]</scope>
    <source>
        <strain>cv. Nipponbare</strain>
    </source>
</reference>
<reference key="3">
    <citation type="journal article" date="2005" name="Nature">
        <title>The map-based sequence of the rice genome.</title>
        <authorList>
            <consortium name="International rice genome sequencing project (IRGSP)"/>
        </authorList>
    </citation>
    <scope>NUCLEOTIDE SEQUENCE [LARGE SCALE GENOMIC DNA]</scope>
    <source>
        <strain>cv. Nipponbare</strain>
    </source>
</reference>
<reference key="4">
    <citation type="journal article" date="2008" name="Nucleic Acids Res.">
        <title>The rice annotation project database (RAP-DB): 2008 update.</title>
        <authorList>
            <consortium name="The rice annotation project (RAP)"/>
        </authorList>
    </citation>
    <scope>GENOME REANNOTATION</scope>
    <source>
        <strain>cv. Nipponbare</strain>
    </source>
</reference>
<reference key="5">
    <citation type="journal article" date="2013" name="Rice">
        <title>Improvement of the Oryza sativa Nipponbare reference genome using next generation sequence and optical map data.</title>
        <authorList>
            <person name="Kawahara Y."/>
            <person name="de la Bastide M."/>
            <person name="Hamilton J.P."/>
            <person name="Kanamori H."/>
            <person name="McCombie W.R."/>
            <person name="Ouyang S."/>
            <person name="Schwartz D.C."/>
            <person name="Tanaka T."/>
            <person name="Wu J."/>
            <person name="Zhou S."/>
            <person name="Childs K.L."/>
            <person name="Davidson R.M."/>
            <person name="Lin H."/>
            <person name="Quesada-Ocampo L."/>
            <person name="Vaillancourt B."/>
            <person name="Sakai H."/>
            <person name="Lee S.S."/>
            <person name="Kim J."/>
            <person name="Numa H."/>
            <person name="Itoh T."/>
            <person name="Buell C.R."/>
            <person name="Matsumoto T."/>
        </authorList>
    </citation>
    <scope>GENOME REANNOTATION</scope>
    <source>
        <strain>cv. Nipponbare</strain>
    </source>
</reference>
<reference key="6">
    <citation type="journal article" date="2003" name="Science">
        <title>Collection, mapping, and annotation of over 28,000 cDNA clones from japonica rice.</title>
        <authorList>
            <consortium name="The rice full-length cDNA consortium"/>
        </authorList>
    </citation>
    <scope>NUCLEOTIDE SEQUENCE [LARGE SCALE MRNA]</scope>
    <source>
        <strain>cv. Nipponbare</strain>
    </source>
</reference>
<reference key="7">
    <citation type="journal article" date="2005" name="Plant Cell Physiol.">
        <title>Suppression of tiller bud activity in tillering dwarf mutants of rice.</title>
        <authorList>
            <person name="Ishikawa S."/>
            <person name="Maekawa M."/>
            <person name="Arite T."/>
            <person name="Onishi K."/>
            <person name="Takamure I."/>
            <person name="Kyozuka J."/>
        </authorList>
    </citation>
    <scope>DISRUPTION PHENOTYPE</scope>
    <source>
        <strain>cv. Shiokari</strain>
    </source>
</reference>
<reference key="8">
    <citation type="journal article" date="2007" name="Plant J.">
        <title>DWARF10, an RMS1/MAX4/DAD1 ortholog, controls lateral bud outgrowth in rice.</title>
        <authorList>
            <person name="Arite T."/>
            <person name="Iwata H."/>
            <person name="Ohshima K."/>
            <person name="Maekawa M."/>
            <person name="Nakajima M."/>
            <person name="Kojima M."/>
            <person name="Sakakibara H."/>
            <person name="Kyozuka J."/>
        </authorList>
    </citation>
    <scope>DISRUPTION PHENOTYPE</scope>
    <source>
        <strain>cv. Shiokari</strain>
    </source>
</reference>
<reference key="9">
    <citation type="journal article" date="2009" name="Planta">
        <title>Identification and characterization of HTD2: a novel gene negatively regulating tiller bud outgrowth in rice.</title>
        <authorList>
            <person name="Liu W."/>
            <person name="Wu C."/>
            <person name="Fu Y."/>
            <person name="Hu G."/>
            <person name="Si H."/>
            <person name="Zhu L."/>
            <person name="Luan W."/>
            <person name="He Z."/>
            <person name="Sun Z."/>
        </authorList>
    </citation>
    <scope>FUNCTION</scope>
    <scope>DISRUPTION PHENOTYPE</scope>
</reference>
<reference key="10">
    <citation type="journal article" date="2009" name="Plant Cell Physiol.">
        <title>d14, a strigolactone-insensitive mutant of rice, shows an accelerated outgrowth of tillers.</title>
        <authorList>
            <person name="Arite T."/>
            <person name="Umehara M."/>
            <person name="Ishikawa S."/>
            <person name="Hanada A."/>
            <person name="Maekawa M."/>
            <person name="Yamaguchi S."/>
            <person name="Kyozuka J."/>
        </authorList>
    </citation>
    <scope>FUNCTION</scope>
    <scope>TISSUE SPECIFICITY</scope>
    <scope>DISRUPTION PHENOTYPE</scope>
</reference>
<reference key="11">
    <citation type="journal article" date="2012" name="BMC Res. Notes">
        <title>The computational-based structure of Dwarf14 provides evidence for its role as potential strigolactone receptor in plants.</title>
        <authorList>
            <person name="Gaiji N."/>
            <person name="Cardinale F."/>
            <person name="Prandi C."/>
            <person name="Bonfante P."/>
            <person name="Ranghino G."/>
        </authorList>
    </citation>
    <scope>3D-STRUCTURE MODELING</scope>
</reference>
<reference key="12">
    <citation type="journal article" date="2013" name="Nature">
        <title>DWARF 53 acts as a repressor of strigolactone signalling in rice.</title>
        <authorList>
            <person name="Jiang L."/>
            <person name="Liu X."/>
            <person name="Xiong G."/>
            <person name="Liu H."/>
            <person name="Chen F."/>
            <person name="Wang L."/>
            <person name="Meng X."/>
            <person name="Liu G."/>
            <person name="Yu H."/>
            <person name="Yuan Y."/>
            <person name="Yi W."/>
            <person name="Zhao L."/>
            <person name="Ma H."/>
            <person name="He Y."/>
            <person name="Wu Z."/>
            <person name="Melcher K."/>
            <person name="Qian Q."/>
            <person name="Xu H.E."/>
            <person name="Wang Y."/>
            <person name="Li J."/>
        </authorList>
    </citation>
    <scope>INTERACTION WITH D53 AND D3</scope>
    <scope>ACTIVE SITES</scope>
    <scope>MUTAGENESIS OF SER-147; GLY-153; ASP-268 AND HIS-297</scope>
</reference>
<reference key="13">
    <citation type="journal article" date="2013" name="Nature">
        <title>D14-SCF(D3)-dependent degradation of D53 regulates strigolactone signalling.</title>
        <authorList>
            <person name="Zhou F."/>
            <person name="Lin Q."/>
            <person name="Zhu L."/>
            <person name="Ren Y."/>
            <person name="Zhou K."/>
            <person name="Shabek N."/>
            <person name="Wu F."/>
            <person name="Mao H."/>
            <person name="Dong W."/>
            <person name="Gan L."/>
            <person name="Ma W."/>
            <person name="Gao H."/>
            <person name="Chen J."/>
            <person name="Yang C."/>
            <person name="Wang D."/>
            <person name="Tan J."/>
            <person name="Zhang X."/>
            <person name="Guo X."/>
            <person name="Wang J."/>
            <person name="Jiang L."/>
            <person name="Liu X."/>
            <person name="Chen W."/>
            <person name="Chu J."/>
            <person name="Yan C."/>
            <person name="Ueno K."/>
            <person name="Ito S."/>
            <person name="Asami T."/>
            <person name="Cheng Z."/>
            <person name="Wang J."/>
            <person name="Lei C."/>
            <person name="Zhai H."/>
            <person name="Wu C."/>
            <person name="Wang H."/>
            <person name="Zheng N."/>
            <person name="Wan J."/>
        </authorList>
    </citation>
    <scope>INTERACTION WITH D53 AND D3</scope>
</reference>
<reference key="14">
    <citation type="journal article" date="2014" name="Curr. Opin. Plant Biol.">
        <title>Strigolactone signalling: standing on the shoulders of DWARFs.</title>
        <authorList>
            <person name="Bennett T."/>
            <person name="Leyser O."/>
        </authorList>
    </citation>
    <scope>REVIEW</scope>
</reference>
<reference key="15">
    <citation type="journal article" date="2014" name="Plant Cell Physiol.">
        <title>DWARF3 participates in an SCF complex and associates with DWARF14 to suppress rice shoot branching.</title>
        <authorList>
            <person name="Zhao J."/>
            <person name="Wang T."/>
            <person name="Wang M."/>
            <person name="Liu Y."/>
            <person name="Yuan S."/>
            <person name="Gao Y."/>
            <person name="Yin L."/>
            <person name="Sun W."/>
            <person name="Peng L."/>
            <person name="Zhang W."/>
            <person name="Wan J."/>
            <person name="Li X."/>
        </authorList>
    </citation>
    <scope>FUNCTION</scope>
    <scope>INTERACTION WITH D3</scope>
    <scope>SUBCELLULAR LOCATION</scope>
</reference>
<reference key="16">
    <citation type="journal article" date="2015" name="Plant Cell Physiol.">
        <title>Structural requirements of strigolactones for shoot branching inhibition in rice and Arabidopsis.</title>
        <authorList>
            <person name="Umehara M."/>
            <person name="Cao M."/>
            <person name="Akiyama K."/>
            <person name="Akatsu T."/>
            <person name="Seto Y."/>
            <person name="Hanada A."/>
            <person name="Li W."/>
            <person name="Takeda-Kamiya N."/>
            <person name="Morimoto Y."/>
            <person name="Yamaguchi S."/>
        </authorList>
    </citation>
    <scope>INTERACTION WITH D53</scope>
</reference>
<reference key="17">
    <citation type="journal article" date="2013" name="Genes Cells">
        <title>Structures of D14 and D14L in the strigolactone and karrikin signaling pathways.</title>
        <authorList>
            <person name="Kagiyama M."/>
            <person name="Hirano Y."/>
            <person name="Mori T."/>
            <person name="Kim S.Y."/>
            <person name="Kyozuka J."/>
            <person name="Seto Y."/>
            <person name="Yamaguchi S."/>
            <person name="Hakoshima T."/>
        </authorList>
    </citation>
    <scope>X-RAY CRYSTALLOGRAPHY (1.45 ANGSTROMS) OF 55-318 IN COMPLEX WITH INHIBITOR</scope>
    <scope>FUNCTION</scope>
</reference>
<reference key="18">
    <citation type="journal article" date="2013" name="Cell Res.">
        <title>Crystal structures of two phytohormone signal-transducing alpha/beta hydrolases: karrikin-signaling KAI2 and strigolactone-signaling DWARF14.</title>
        <authorList>
            <person name="Zhao L.H."/>
            <person name="Zhou X.E."/>
            <person name="Wu Z.S."/>
            <person name="Yi W."/>
            <person name="Xu Y."/>
            <person name="Li S."/>
            <person name="Xu T.H."/>
            <person name="Liu Y."/>
            <person name="Chen R.Z."/>
            <person name="Kovach A."/>
            <person name="Kang Y."/>
            <person name="Hou L."/>
            <person name="He Y."/>
            <person name="Xie C."/>
            <person name="Song W."/>
            <person name="Zhong D."/>
            <person name="Xu Y."/>
            <person name="Wang Y."/>
            <person name="Li J."/>
            <person name="Zhang C."/>
            <person name="Melcher K."/>
            <person name="Xu H.E."/>
        </authorList>
    </citation>
    <scope>X-RAY CRYSTALLOGRAPHY (1.55 ANGSTROMS) OF 51-318</scope>
    <scope>FUNCTION</scope>
</reference>
<reference key="19">
    <citation type="journal article" date="2013" name="Nat. Commun.">
        <title>Molecular mechanism of strigolactone perception by DWARF14.</title>
        <authorList>
            <person name="Nakamura H."/>
            <person name="Xue Y.L."/>
            <person name="Miyakawa T."/>
            <person name="Hou F."/>
            <person name="Qin H.M."/>
            <person name="Fukui K."/>
            <person name="Shi X."/>
            <person name="Ito E."/>
            <person name="Ito S."/>
            <person name="Park S.H."/>
            <person name="Miyauchi Y."/>
            <person name="Asano A."/>
            <person name="Totsuka N."/>
            <person name="Ueda T."/>
            <person name="Tanokura M."/>
            <person name="Asami T."/>
        </authorList>
    </citation>
    <scope>X-RAY CRYSTALLOGRAPHY (1.75 ANGSTROMS) OF 54-318 OF APOPROTEIN AND IN COMPLEX WITH SUBSTRATE ANALOG</scope>
    <scope>INTERACTION WITH SLR1</scope>
    <scope>SUBCELLULAR LOCATION</scope>
    <scope>FUNCTION</scope>
    <scope>MUTAGENESIS OF PHE-186; TRP-205; PHE-245 AND HIS-297</scope>
</reference>
<reference key="20">
    <citation type="journal article" date="2015" name="Cell Res.">
        <title>Destabilization of strigolactone receptor DWARF14 by binding of ligand and E3-ligase signaling effector DWARF3.</title>
        <authorList>
            <person name="Zhao L.H."/>
            <person name="Zhou X.E."/>
            <person name="Yi W."/>
            <person name="Wu Z."/>
            <person name="Liu Y."/>
            <person name="Kang Y."/>
            <person name="Hou L."/>
            <person name="de Waal P.W."/>
            <person name="Li S."/>
            <person name="Jiang Y."/>
            <person name="Scaffidi A."/>
            <person name="Flematti G.R."/>
            <person name="Smith S.M."/>
            <person name="Lam V.Q."/>
            <person name="Griffin P.R."/>
            <person name="Wang Y."/>
            <person name="Li J."/>
            <person name="Melcher K."/>
            <person name="Xu H.E."/>
        </authorList>
    </citation>
    <scope>X-RAY CRYSTALLOGRAPHY (2.40 ANGSTROMS) OF 52-318 IN COMPLEX WITH STRIGOLACTONE</scope>
</reference>
<reference key="21">
    <citation type="journal article" date="2018" name="Nature">
        <title>Structural plasticity of D3-D14 ubiquitin ligase in strigolactone signalling.</title>
        <authorList>
            <person name="Shabek N."/>
            <person name="Ticchiarelli F."/>
            <person name="Mao H."/>
            <person name="Hinds T.R."/>
            <person name="Leyser O."/>
            <person name="Zheng N."/>
        </authorList>
    </citation>
    <scope>X-RAY CRYSTALLOGRAPHY (2.39 ANGSTROMS) OF 54-318</scope>
</reference>
<protein>
    <recommendedName>
        <fullName evidence="17">Strigolactone esterase D14</fullName>
        <ecNumber evidence="17">3.1.-.-</ecNumber>
    </recommendedName>
    <alternativeName>
        <fullName evidence="14">Protein DWARF 14</fullName>
    </alternativeName>
    <alternativeName>
        <fullName evidence="16">Protein DWARF 88</fullName>
    </alternativeName>
    <alternativeName>
        <fullName evidence="15">Protein HIGH-TILLERING DWARF 2</fullName>
    </alternativeName>
</protein>
<proteinExistence type="evidence at protein level"/>
<gene>
    <name evidence="14" type="primary">D14</name>
    <name evidence="16" type="synonym">D88</name>
    <name evidence="15" type="synonym">HTD2</name>
    <name evidence="19" type="ordered locus">Os03g0203200</name>
    <name evidence="18" type="ordered locus">LOC_Os03g10620</name>
</gene>